<organism>
    <name type="scientific">Xenopus laevis</name>
    <name type="common">African clawed frog</name>
    <dbReference type="NCBI Taxonomy" id="8355"/>
    <lineage>
        <taxon>Eukaryota</taxon>
        <taxon>Metazoa</taxon>
        <taxon>Chordata</taxon>
        <taxon>Craniata</taxon>
        <taxon>Vertebrata</taxon>
        <taxon>Euteleostomi</taxon>
        <taxon>Amphibia</taxon>
        <taxon>Batrachia</taxon>
        <taxon>Anura</taxon>
        <taxon>Pipoidea</taxon>
        <taxon>Pipidae</taxon>
        <taxon>Xenopodinae</taxon>
        <taxon>Xenopus</taxon>
        <taxon>Xenopus</taxon>
    </lineage>
</organism>
<name>CRG4_XENLA</name>
<gene>
    <name type="primary">cryg4</name>
    <name type="synonym">gcry4</name>
</gene>
<proteinExistence type="evidence at transcript level"/>
<comment type="function">
    <text>Crystallins are the dominant structural components of the vertebrate eye lens.</text>
</comment>
<comment type="subunit">
    <text evidence="1">Monomer.</text>
</comment>
<comment type="domain">
    <text>Has a two-domain beta-structure, folded into four very similar Greek key motifs.</text>
</comment>
<comment type="similarity">
    <text evidence="3">Belongs to the beta/gamma-crystallin family.</text>
</comment>
<protein>
    <recommendedName>
        <fullName>Gamma-crystallin-4</fullName>
    </recommendedName>
    <alternativeName>
        <fullName>Gamma-4-CRY</fullName>
    </alternativeName>
    <alternativeName>
        <fullName>Gamma-crystallin IV</fullName>
    </alternativeName>
</protein>
<accession>P55941</accession>
<dbReference type="EMBL" id="M99582">
    <property type="status" value="NOT_ANNOTATED_CDS"/>
    <property type="molecule type" value="mRNA"/>
</dbReference>
<dbReference type="PIR" id="PN0545">
    <property type="entry name" value="PN0545"/>
</dbReference>
<dbReference type="SMR" id="P55941"/>
<dbReference type="Proteomes" id="UP000186698">
    <property type="component" value="Unplaced"/>
</dbReference>
<dbReference type="GO" id="GO:0005212">
    <property type="term" value="F:structural constituent of eye lens"/>
    <property type="evidence" value="ECO:0000318"/>
    <property type="project" value="GO_Central"/>
</dbReference>
<dbReference type="GO" id="GO:0002088">
    <property type="term" value="P:lens development in camera-type eye"/>
    <property type="evidence" value="ECO:0000318"/>
    <property type="project" value="GO_Central"/>
</dbReference>
<dbReference type="GO" id="GO:0007601">
    <property type="term" value="P:visual perception"/>
    <property type="evidence" value="ECO:0000318"/>
    <property type="project" value="GO_Central"/>
</dbReference>
<dbReference type="FunFam" id="2.60.20.10:FF:000001">
    <property type="entry name" value="Crystallin gamma S"/>
    <property type="match status" value="1"/>
</dbReference>
<dbReference type="FunFam" id="2.60.20.10:FF:000003">
    <property type="entry name" value="Crystallin gamma S"/>
    <property type="match status" value="1"/>
</dbReference>
<dbReference type="Gene3D" id="2.60.20.10">
    <property type="entry name" value="Crystallins"/>
    <property type="match status" value="2"/>
</dbReference>
<dbReference type="InterPro" id="IPR050252">
    <property type="entry name" value="Beta/Gamma-Crystallin"/>
</dbReference>
<dbReference type="InterPro" id="IPR001064">
    <property type="entry name" value="Beta/gamma_crystallin"/>
</dbReference>
<dbReference type="InterPro" id="IPR011024">
    <property type="entry name" value="G_crystallin-like"/>
</dbReference>
<dbReference type="PANTHER" id="PTHR11818">
    <property type="entry name" value="BETA/GAMMA CRYSTALLIN"/>
    <property type="match status" value="1"/>
</dbReference>
<dbReference type="PANTHER" id="PTHR11818:SF135">
    <property type="entry name" value="GAMMA-CRYSTALLIN-2"/>
    <property type="match status" value="1"/>
</dbReference>
<dbReference type="Pfam" id="PF00030">
    <property type="entry name" value="Crystall"/>
    <property type="match status" value="2"/>
</dbReference>
<dbReference type="PRINTS" id="PR01367">
    <property type="entry name" value="BGCRYSTALLIN"/>
</dbReference>
<dbReference type="SMART" id="SM00247">
    <property type="entry name" value="XTALbg"/>
    <property type="match status" value="2"/>
</dbReference>
<dbReference type="SUPFAM" id="SSF49695">
    <property type="entry name" value="gamma-Crystallin-like"/>
    <property type="match status" value="1"/>
</dbReference>
<dbReference type="PROSITE" id="PS50915">
    <property type="entry name" value="CRYSTALLIN_BETA_GAMMA"/>
    <property type="match status" value="4"/>
</dbReference>
<sequence>IFFYEERNFQGRCYECSSECSDLSSYFNRCNSIRVESGNWILYEQPSYRGHQYYLWKGEYPDFQRWMGFNDYIKSCRFIPHPHSQYKMRIYERGDFQGQMMEFFDDCPNTYDRFRFRDIHSCNVSDGHWMFYEEPNYKGRQYYLRPGEYRRFSDWGASSARIGSFRRVHHMV</sequence>
<keyword id="KW-0273">Eye lens protein</keyword>
<keyword id="KW-1185">Reference proteome</keyword>
<keyword id="KW-0677">Repeat</keyword>
<reference key="1">
    <citation type="journal article" date="1993" name="Gene">
        <title>Characterization of Xenopus laevis gamma-crystallin-encoding genes.</title>
        <authorList>
            <person name="Smolich B.D."/>
            <person name="Tarkington S.K."/>
            <person name="Saha M.S."/>
            <person name="Stathakis D.G."/>
            <person name="Grainger R.M."/>
        </authorList>
    </citation>
    <scope>NUCLEOTIDE SEQUENCE [MRNA]</scope>
</reference>
<evidence type="ECO:0000250" key="1"/>
<evidence type="ECO:0000255" key="2">
    <source>
        <dbReference type="PROSITE-ProRule" id="PRU00028"/>
    </source>
</evidence>
<evidence type="ECO:0000305" key="3"/>
<feature type="chain" id="PRO_0000057604" description="Gamma-crystallin-4">
    <location>
        <begin position="1" status="less than"/>
        <end position="172"/>
    </location>
</feature>
<feature type="domain" description="Beta/gamma crystallin 'Greek key' 1" evidence="2">
    <location>
        <begin position="1" status="less than"/>
        <end position="37"/>
    </location>
</feature>
<feature type="domain" description="Beta/gamma crystallin 'Greek key' 2" evidence="2">
    <location>
        <begin position="38"/>
        <end position="80"/>
    </location>
</feature>
<feature type="domain" description="Beta/gamma crystallin 'Greek key' 3" evidence="2">
    <location>
        <begin position="86"/>
        <end position="126"/>
    </location>
</feature>
<feature type="domain" description="Beta/gamma crystallin 'Greek key' 4" evidence="2">
    <location>
        <begin position="127"/>
        <end position="169"/>
    </location>
</feature>
<feature type="region of interest" description="Connecting peptide">
    <location>
        <begin position="81"/>
        <end position="85"/>
    </location>
</feature>
<feature type="non-terminal residue">
    <location>
        <position position="1"/>
    </location>
</feature>